<reference key="1">
    <citation type="journal article" date="1997" name="Nature">
        <title>The complete genome sequence of the hyperthermophilic, sulphate-reducing archaeon Archaeoglobus fulgidus.</title>
        <authorList>
            <person name="Klenk H.-P."/>
            <person name="Clayton R.A."/>
            <person name="Tomb J.-F."/>
            <person name="White O."/>
            <person name="Nelson K.E."/>
            <person name="Ketchum K.A."/>
            <person name="Dodson R.J."/>
            <person name="Gwinn M.L."/>
            <person name="Hickey E.K."/>
            <person name="Peterson J.D."/>
            <person name="Richardson D.L."/>
            <person name="Kerlavage A.R."/>
            <person name="Graham D.E."/>
            <person name="Kyrpides N.C."/>
            <person name="Fleischmann R.D."/>
            <person name="Quackenbush J."/>
            <person name="Lee N.H."/>
            <person name="Sutton G.G."/>
            <person name="Gill S.R."/>
            <person name="Kirkness E.F."/>
            <person name="Dougherty B.A."/>
            <person name="McKenney K."/>
            <person name="Adams M.D."/>
            <person name="Loftus B.J."/>
            <person name="Peterson S.N."/>
            <person name="Reich C.I."/>
            <person name="McNeil L.K."/>
            <person name="Badger J.H."/>
            <person name="Glodek A."/>
            <person name="Zhou L."/>
            <person name="Overbeek R."/>
            <person name="Gocayne J.D."/>
            <person name="Weidman J.F."/>
            <person name="McDonald L.A."/>
            <person name="Utterback T.R."/>
            <person name="Cotton M.D."/>
            <person name="Spriggs T."/>
            <person name="Artiach P."/>
            <person name="Kaine B.P."/>
            <person name="Sykes S.M."/>
            <person name="Sadow P.W."/>
            <person name="D'Andrea K.P."/>
            <person name="Bowman C."/>
            <person name="Fujii C."/>
            <person name="Garland S.A."/>
            <person name="Mason T.M."/>
            <person name="Olsen G.J."/>
            <person name="Fraser C.M."/>
            <person name="Smith H.O."/>
            <person name="Woese C.R."/>
            <person name="Venter J.C."/>
        </authorList>
    </citation>
    <scope>NUCLEOTIDE SEQUENCE [LARGE SCALE GENOMIC DNA]</scope>
    <source>
        <strain>ATCC 49558 / DSM 4304 / JCM 9628 / NBRC 100126 / VC-16</strain>
    </source>
</reference>
<sequence>MSSEAGNPHPGFKMEYLSGSIAPDAGYTISVDWGKKFHGEDVNKAIKIANTMLSLAKGTDEKAFAKGWLAHLMQDRVAHGNGQGLPNDRTYGVGYSNYAAQKYGIDHITAEFYVNGRVIHEKGWNWDFVRIAIPTKLIAKAMKSLYGSSPSESDLSNAYNKFAAEYYAELTFWNSPAGNTLYLSLYLTGVVADYDDYVQEVNCNPYEKSIELTRSPNAMSATFSPLVAKDAKGTNVQIKKWVKEYATMLEKSGAIKVSRKFENGWLVIEFKMTDKAKADKIAEQVLRNMVKSGELPENTAKILSRMF</sequence>
<organism>
    <name type="scientific">Archaeoglobus fulgidus (strain ATCC 49558 / DSM 4304 / JCM 9628 / NBRC 100126 / VC-16)</name>
    <dbReference type="NCBI Taxonomy" id="224325"/>
    <lineage>
        <taxon>Archaea</taxon>
        <taxon>Methanobacteriati</taxon>
        <taxon>Methanobacteriota</taxon>
        <taxon>Archaeoglobi</taxon>
        <taxon>Archaeoglobales</taxon>
        <taxon>Archaeoglobaceae</taxon>
        <taxon>Archaeoglobus</taxon>
    </lineage>
</organism>
<proteinExistence type="predicted"/>
<name>Y2172_ARCFU</name>
<keyword id="KW-1185">Reference proteome</keyword>
<accession>O28110</accession>
<protein>
    <recommendedName>
        <fullName>Uncharacterized protein AF_2172</fullName>
    </recommendedName>
</protein>
<dbReference type="EMBL" id="AE000782">
    <property type="protein sequence ID" value="AAB89091.1"/>
    <property type="molecule type" value="Genomic_DNA"/>
</dbReference>
<dbReference type="PIR" id="D69521">
    <property type="entry name" value="D69521"/>
</dbReference>
<dbReference type="STRING" id="224325.AF_2172"/>
<dbReference type="PaxDb" id="224325-AF_2172"/>
<dbReference type="EnsemblBacteria" id="AAB89091">
    <property type="protein sequence ID" value="AAB89091"/>
    <property type="gene ID" value="AF_2172"/>
</dbReference>
<dbReference type="KEGG" id="afu:AF_2172"/>
<dbReference type="HOGENOM" id="CLU_904897_0_0_2"/>
<dbReference type="Proteomes" id="UP000002199">
    <property type="component" value="Chromosome"/>
</dbReference>
<dbReference type="InterPro" id="IPR029002">
    <property type="entry name" value="PLPC/GPLD1"/>
</dbReference>
<dbReference type="Pfam" id="PF00882">
    <property type="entry name" value="Zn_dep_PLPC"/>
    <property type="match status" value="1"/>
</dbReference>
<gene>
    <name type="ordered locus">AF_2172</name>
</gene>
<feature type="chain" id="PRO_0000128111" description="Uncharacterized protein AF_2172">
    <location>
        <begin position="1"/>
        <end position="307"/>
    </location>
</feature>